<protein>
    <recommendedName>
        <fullName evidence="1">UPF0178 protein BCE33L2782</fullName>
    </recommendedName>
</protein>
<dbReference type="EMBL" id="CP000001">
    <property type="protein sequence ID" value="AAU17479.1"/>
    <property type="molecule type" value="Genomic_DNA"/>
</dbReference>
<dbReference type="RefSeq" id="WP_000708748.1">
    <property type="nucleotide sequence ID" value="NC_006274.1"/>
</dbReference>
<dbReference type="KEGG" id="bcz:BCE33L2782"/>
<dbReference type="PATRIC" id="fig|288681.22.peg.2676"/>
<dbReference type="Proteomes" id="UP000002612">
    <property type="component" value="Chromosome"/>
</dbReference>
<dbReference type="HAMAP" id="MF_00489">
    <property type="entry name" value="UPF0178"/>
    <property type="match status" value="1"/>
</dbReference>
<dbReference type="InterPro" id="IPR003791">
    <property type="entry name" value="UPF0178"/>
</dbReference>
<dbReference type="NCBIfam" id="NF001095">
    <property type="entry name" value="PRK00124.1"/>
    <property type="match status" value="1"/>
</dbReference>
<dbReference type="PANTHER" id="PTHR35146">
    <property type="entry name" value="UPF0178 PROTEIN YAII"/>
    <property type="match status" value="1"/>
</dbReference>
<dbReference type="PANTHER" id="PTHR35146:SF1">
    <property type="entry name" value="UPF0178 PROTEIN YAII"/>
    <property type="match status" value="1"/>
</dbReference>
<dbReference type="Pfam" id="PF02639">
    <property type="entry name" value="DUF188"/>
    <property type="match status" value="1"/>
</dbReference>
<gene>
    <name type="ordered locus">BCE33L2782</name>
</gene>
<name>Y2782_BACCZ</name>
<organism>
    <name type="scientific">Bacillus cereus (strain ZK / E33L)</name>
    <dbReference type="NCBI Taxonomy" id="288681"/>
    <lineage>
        <taxon>Bacteria</taxon>
        <taxon>Bacillati</taxon>
        <taxon>Bacillota</taxon>
        <taxon>Bacilli</taxon>
        <taxon>Bacillales</taxon>
        <taxon>Bacillaceae</taxon>
        <taxon>Bacillus</taxon>
        <taxon>Bacillus cereus group</taxon>
    </lineage>
</organism>
<reference key="1">
    <citation type="journal article" date="2006" name="J. Bacteriol.">
        <title>Pathogenomic sequence analysis of Bacillus cereus and Bacillus thuringiensis isolates closely related to Bacillus anthracis.</title>
        <authorList>
            <person name="Han C.S."/>
            <person name="Xie G."/>
            <person name="Challacombe J.F."/>
            <person name="Altherr M.R."/>
            <person name="Bhotika S.S."/>
            <person name="Bruce D."/>
            <person name="Campbell C.S."/>
            <person name="Campbell M.L."/>
            <person name="Chen J."/>
            <person name="Chertkov O."/>
            <person name="Cleland C."/>
            <person name="Dimitrijevic M."/>
            <person name="Doggett N.A."/>
            <person name="Fawcett J.J."/>
            <person name="Glavina T."/>
            <person name="Goodwin L.A."/>
            <person name="Hill K.K."/>
            <person name="Hitchcock P."/>
            <person name="Jackson P.J."/>
            <person name="Keim P."/>
            <person name="Kewalramani A.R."/>
            <person name="Longmire J."/>
            <person name="Lucas S."/>
            <person name="Malfatti S."/>
            <person name="McMurry K."/>
            <person name="Meincke L.J."/>
            <person name="Misra M."/>
            <person name="Moseman B.L."/>
            <person name="Mundt M."/>
            <person name="Munk A.C."/>
            <person name="Okinaka R.T."/>
            <person name="Parson-Quintana B."/>
            <person name="Reilly L.P."/>
            <person name="Richardson P."/>
            <person name="Robinson D.L."/>
            <person name="Rubin E."/>
            <person name="Saunders E."/>
            <person name="Tapia R."/>
            <person name="Tesmer J.G."/>
            <person name="Thayer N."/>
            <person name="Thompson L.S."/>
            <person name="Tice H."/>
            <person name="Ticknor L.O."/>
            <person name="Wills P.L."/>
            <person name="Brettin T.S."/>
            <person name="Gilna P."/>
        </authorList>
    </citation>
    <scope>NUCLEOTIDE SEQUENCE [LARGE SCALE GENOMIC DNA]</scope>
    <source>
        <strain>ZK / E33L</strain>
    </source>
</reference>
<evidence type="ECO:0000255" key="1">
    <source>
        <dbReference type="HAMAP-Rule" id="MF_00489"/>
    </source>
</evidence>
<comment type="similarity">
    <text evidence="1">Belongs to the UPF0178 family.</text>
</comment>
<sequence>MKIYVDADACPVKDVIIFEATKAEIPVTLVTSFSHYSNAEQPKGVETIYVDSGADAADYRIMQLAKKEDLIVTQDYGLASLALAKGCIVLHHKGYKYTNENIDQLLQTRYLSAMVRKSGKRTKGPKPFTAEDKEKFRALFKSIIAL</sequence>
<feature type="chain" id="PRO_0000241806" description="UPF0178 protein BCE33L2782">
    <location>
        <begin position="1"/>
        <end position="146"/>
    </location>
</feature>
<accession>Q639P8</accession>
<proteinExistence type="inferred from homology"/>